<dbReference type="EC" id="2.1.1.-" evidence="3 4 5 6"/>
<dbReference type="EMBL" id="AK292194">
    <property type="protein sequence ID" value="BAF84883.1"/>
    <property type="molecule type" value="mRNA"/>
</dbReference>
<dbReference type="EMBL" id="CH471111">
    <property type="protein sequence ID" value="EAW58101.1"/>
    <property type="molecule type" value="Genomic_DNA"/>
</dbReference>
<dbReference type="EMBL" id="BC053560">
    <property type="protein sequence ID" value="AAH53560.1"/>
    <property type="molecule type" value="mRNA"/>
</dbReference>
<dbReference type="CCDS" id="CCDS8790.1"/>
<dbReference type="RefSeq" id="NP_859059.1">
    <property type="nucleotide sequence ID" value="NM_181708.3"/>
</dbReference>
<dbReference type="PDB" id="6L8U">
    <property type="method" value="X-ray"/>
    <property type="resolution" value="2.92 A"/>
    <property type="chains" value="A/B/C/D=14-284"/>
</dbReference>
<dbReference type="PDBsum" id="6L8U"/>
<dbReference type="SMR" id="Q7Z5W3"/>
<dbReference type="BioGRID" id="126839">
    <property type="interactions" value="9"/>
</dbReference>
<dbReference type="FunCoup" id="Q7Z5W3">
    <property type="interactions" value="2818"/>
</dbReference>
<dbReference type="IntAct" id="Q7Z5W3">
    <property type="interactions" value="5"/>
</dbReference>
<dbReference type="STRING" id="9606.ENSP00000335201"/>
<dbReference type="BindingDB" id="Q7Z5W3"/>
<dbReference type="ChEMBL" id="CHEMBL3588740"/>
<dbReference type="iPTMnet" id="Q7Z5W3"/>
<dbReference type="PhosphoSitePlus" id="Q7Z5W3"/>
<dbReference type="BioMuta" id="BCDIN3D"/>
<dbReference type="DMDM" id="74738762"/>
<dbReference type="jPOST" id="Q7Z5W3"/>
<dbReference type="MassIVE" id="Q7Z5W3"/>
<dbReference type="PaxDb" id="9606-ENSP00000335201"/>
<dbReference type="PeptideAtlas" id="Q7Z5W3"/>
<dbReference type="ProteomicsDB" id="69357"/>
<dbReference type="Pumba" id="Q7Z5W3"/>
<dbReference type="Antibodypedia" id="49296">
    <property type="antibodies" value="47 antibodies from 15 providers"/>
</dbReference>
<dbReference type="DNASU" id="144233"/>
<dbReference type="Ensembl" id="ENST00000333924.6">
    <property type="protein sequence ID" value="ENSP00000335201.4"/>
    <property type="gene ID" value="ENSG00000186666.6"/>
</dbReference>
<dbReference type="GeneID" id="144233"/>
<dbReference type="KEGG" id="hsa:144233"/>
<dbReference type="MANE-Select" id="ENST00000333924.6">
    <property type="protein sequence ID" value="ENSP00000335201.4"/>
    <property type="RefSeq nucleotide sequence ID" value="NM_181708.3"/>
    <property type="RefSeq protein sequence ID" value="NP_859059.1"/>
</dbReference>
<dbReference type="UCSC" id="uc001rvh.4">
    <property type="organism name" value="human"/>
</dbReference>
<dbReference type="AGR" id="HGNC:27050"/>
<dbReference type="CTD" id="144233"/>
<dbReference type="DisGeNET" id="144233"/>
<dbReference type="GeneCards" id="BCDIN3D"/>
<dbReference type="HGNC" id="HGNC:27050">
    <property type="gene designation" value="BCDIN3D"/>
</dbReference>
<dbReference type="HPA" id="ENSG00000186666">
    <property type="expression patterns" value="Tissue enriched (skeletal)"/>
</dbReference>
<dbReference type="MIM" id="619601">
    <property type="type" value="gene"/>
</dbReference>
<dbReference type="neXtProt" id="NX_Q7Z5W3"/>
<dbReference type="OpenTargets" id="ENSG00000186666"/>
<dbReference type="PharmGKB" id="PA162377410"/>
<dbReference type="VEuPathDB" id="HostDB:ENSG00000186666"/>
<dbReference type="eggNOG" id="KOG2899">
    <property type="taxonomic scope" value="Eukaryota"/>
</dbReference>
<dbReference type="GeneTree" id="ENSGT00940000153993"/>
<dbReference type="HOGENOM" id="CLU_082749_0_0_1"/>
<dbReference type="InParanoid" id="Q7Z5W3"/>
<dbReference type="OMA" id="LNHHDQG"/>
<dbReference type="OrthoDB" id="273070at2759"/>
<dbReference type="PAN-GO" id="Q7Z5W3">
    <property type="GO annotations" value="5 GO annotations based on evolutionary models"/>
</dbReference>
<dbReference type="PhylomeDB" id="Q7Z5W3"/>
<dbReference type="TreeFam" id="TF324061"/>
<dbReference type="BRENDA" id="2.1.1.B140">
    <property type="organism ID" value="2681"/>
</dbReference>
<dbReference type="PathwayCommons" id="Q7Z5W3"/>
<dbReference type="Reactome" id="R-HSA-203927">
    <property type="pathway name" value="MicroRNA (miRNA) biogenesis"/>
</dbReference>
<dbReference type="SignaLink" id="Q7Z5W3"/>
<dbReference type="BioGRID-ORCS" id="144233">
    <property type="hits" value="39 hits in 1151 CRISPR screens"/>
</dbReference>
<dbReference type="ChiTaRS" id="BCDIN3D">
    <property type="organism name" value="human"/>
</dbReference>
<dbReference type="GenomeRNAi" id="144233"/>
<dbReference type="Pharos" id="Q7Z5W3">
    <property type="development level" value="Tbio"/>
</dbReference>
<dbReference type="PRO" id="PR:Q7Z5W3"/>
<dbReference type="Proteomes" id="UP000005640">
    <property type="component" value="Chromosome 12"/>
</dbReference>
<dbReference type="RNAct" id="Q7Z5W3">
    <property type="molecule type" value="protein"/>
</dbReference>
<dbReference type="Bgee" id="ENSG00000186666">
    <property type="expression patterns" value="Expressed in male germ line stem cell (sensu Vertebrata) in testis and 119 other cell types or tissues"/>
</dbReference>
<dbReference type="GO" id="GO:0005737">
    <property type="term" value="C:cytoplasm"/>
    <property type="evidence" value="ECO:0000314"/>
    <property type="project" value="UniProtKB"/>
</dbReference>
<dbReference type="GO" id="GO:0005829">
    <property type="term" value="C:cytosol"/>
    <property type="evidence" value="ECO:0000314"/>
    <property type="project" value="HPA"/>
</dbReference>
<dbReference type="GO" id="GO:0005654">
    <property type="term" value="C:nucleoplasm"/>
    <property type="evidence" value="ECO:0000314"/>
    <property type="project" value="HPA"/>
</dbReference>
<dbReference type="GO" id="GO:0005886">
    <property type="term" value="C:plasma membrane"/>
    <property type="evidence" value="ECO:0000314"/>
    <property type="project" value="HPA"/>
</dbReference>
<dbReference type="GO" id="GO:0008171">
    <property type="term" value="F:O-methyltransferase activity"/>
    <property type="evidence" value="ECO:0000269"/>
    <property type="project" value="Reactome"/>
</dbReference>
<dbReference type="GO" id="GO:0070883">
    <property type="term" value="F:pre-miRNA binding"/>
    <property type="evidence" value="ECO:0000314"/>
    <property type="project" value="ARUK-UCL"/>
</dbReference>
<dbReference type="GO" id="GO:0008173">
    <property type="term" value="F:RNA methyltransferase activity"/>
    <property type="evidence" value="ECO:0000314"/>
    <property type="project" value="UniProtKB"/>
</dbReference>
<dbReference type="GO" id="GO:0090486">
    <property type="term" value="F:small RNA 2'-O-methyltransferase activity"/>
    <property type="evidence" value="ECO:0000314"/>
    <property type="project" value="UniProtKB"/>
</dbReference>
<dbReference type="GO" id="GO:0008175">
    <property type="term" value="F:tRNA methyltransferase activity"/>
    <property type="evidence" value="ECO:0000314"/>
    <property type="project" value="UniProtKB"/>
</dbReference>
<dbReference type="GO" id="GO:0010586">
    <property type="term" value="P:miRNA metabolic process"/>
    <property type="evidence" value="ECO:0000304"/>
    <property type="project" value="Reactome"/>
</dbReference>
<dbReference type="GO" id="GO:2000632">
    <property type="term" value="P:negative regulation of pre-miRNA processing"/>
    <property type="evidence" value="ECO:0000314"/>
    <property type="project" value="UniProtKB"/>
</dbReference>
<dbReference type="GO" id="GO:0031054">
    <property type="term" value="P:pre-miRNA processing"/>
    <property type="evidence" value="ECO:0000314"/>
    <property type="project" value="ARUK-UCL"/>
</dbReference>
<dbReference type="GO" id="GO:0001510">
    <property type="term" value="P:RNA methylation"/>
    <property type="evidence" value="ECO:0000314"/>
    <property type="project" value="ARUK-UCL"/>
</dbReference>
<dbReference type="GO" id="GO:0030488">
    <property type="term" value="P:tRNA methylation"/>
    <property type="evidence" value="ECO:0000314"/>
    <property type="project" value="UniProtKB"/>
</dbReference>
<dbReference type="FunFam" id="3.40.50.150:FF:000138">
    <property type="entry name" value="BCDIN3 domain containing RNA methyltransferase"/>
    <property type="match status" value="1"/>
</dbReference>
<dbReference type="Gene3D" id="3.40.50.150">
    <property type="entry name" value="Vaccinia Virus protein VP39"/>
    <property type="match status" value="1"/>
</dbReference>
<dbReference type="InterPro" id="IPR039772">
    <property type="entry name" value="Bin3-like"/>
</dbReference>
<dbReference type="InterPro" id="IPR010675">
    <property type="entry name" value="Bin3_C"/>
</dbReference>
<dbReference type="InterPro" id="IPR024160">
    <property type="entry name" value="BIN3_SAM-bd_dom"/>
</dbReference>
<dbReference type="InterPro" id="IPR029063">
    <property type="entry name" value="SAM-dependent_MTases_sf"/>
</dbReference>
<dbReference type="PANTHER" id="PTHR12315">
    <property type="entry name" value="BICOID-INTERACTING PROTEIN RELATED"/>
    <property type="match status" value="1"/>
</dbReference>
<dbReference type="PANTHER" id="PTHR12315:SF1">
    <property type="entry name" value="RNA 5'-MONOPHOSPHATE METHYLTRANSFERASE"/>
    <property type="match status" value="1"/>
</dbReference>
<dbReference type="Pfam" id="PF06859">
    <property type="entry name" value="Bin3"/>
    <property type="match status" value="1"/>
</dbReference>
<dbReference type="SUPFAM" id="SSF53335">
    <property type="entry name" value="S-adenosyl-L-methionine-dependent methyltransferases"/>
    <property type="match status" value="1"/>
</dbReference>
<dbReference type="PROSITE" id="PS51515">
    <property type="entry name" value="BIN3_SAM"/>
    <property type="match status" value="1"/>
</dbReference>
<comment type="function">
    <text evidence="3 4 5 6">O-methyltransferase that specifically monomethylates 5'-monophosphate of cytoplasmic histidyl tRNA (tRNA(His)), acting as a capping enzyme by protecting tRNA(His) from cleavage by DICER1 (PubMed:28119416, PubMed:31329584, PubMed:31919512). Also able, with less efficiently, to methylate the 5' monophosphate of a subset of pre-miRNAs, acting as a negative regulator of miRNA processing (PubMed:23063121, PubMed:28119416). The 5' monophosphate of pre-miRNAs is recognized by DICER1 and is required for pre-miRNAs processing: methylation at this position reduces the processing of pre-miRNAs by DICER1 (PubMed:23063121). Was also reported to mediate dimethylation of pre-miR-145; however dimethylation cannot be reproduced by another group which observes a monomethylation of pre-miR-145 (PubMed:23063121, PubMed:28119416).</text>
</comment>
<comment type="catalytic activity">
    <reaction evidence="4 5 6">
        <text>a 5'-end 5'-phospho-ribonucleoside-RNA + S-adenosyl-L-methionine = a 5'-end (5'-methylphospho)-ribonucleoside-RNA + S-adenosyl-L-homocysteine</text>
        <dbReference type="Rhea" id="RHEA:58656"/>
        <dbReference type="Rhea" id="RHEA-COMP:15179"/>
        <dbReference type="Rhea" id="RHEA-COMP:15181"/>
        <dbReference type="ChEBI" id="CHEBI:57856"/>
        <dbReference type="ChEBI" id="CHEBI:59789"/>
        <dbReference type="ChEBI" id="CHEBI:138282"/>
        <dbReference type="ChEBI" id="CHEBI:142776"/>
    </reaction>
</comment>
<comment type="catalytic activity">
    <reaction evidence="8">
        <text>a 5'-end 5'-phospho-ribonucleoside-RNA + 2 S-adenosyl-L-methionine = a 5'-end (5'-bismethylphospho)-ribonucleoside-RNA + 2 S-adenosyl-L-homocysteine</text>
        <dbReference type="Rhea" id="RHEA:58640"/>
        <dbReference type="Rhea" id="RHEA-COMP:15179"/>
        <dbReference type="Rhea" id="RHEA-COMP:15182"/>
        <dbReference type="ChEBI" id="CHEBI:57856"/>
        <dbReference type="ChEBI" id="CHEBI:59789"/>
        <dbReference type="ChEBI" id="CHEBI:138282"/>
        <dbReference type="ChEBI" id="CHEBI:142777"/>
    </reaction>
</comment>
<comment type="biophysicochemical properties">
    <kinetics>
        <KM evidence="4">0.25 uM for cytoplasmic histidyl tRNA</KM>
        <KM evidence="4">15 uM for pre-miR-145</KM>
    </kinetics>
</comment>
<comment type="subunit">
    <text evidence="3">Interacts with DICER1; the interaction may be mediated by RNA.</text>
</comment>
<comment type="interaction">
    <interactant intactId="EBI-10257921">
        <id>Q7Z5W3</id>
    </interactant>
    <interactant intactId="EBI-7236323">
        <id>Q6ZN57</id>
        <label>ZFP2</label>
    </interactant>
    <organismsDiffer>false</organismsDiffer>
    <experiments>3</experiments>
</comment>
<comment type="subcellular location">
    <subcellularLocation>
        <location evidence="3">Cytoplasm</location>
    </subcellularLocation>
</comment>
<comment type="similarity">
    <text evidence="7">Belongs to the methyltransferase superfamily.</text>
</comment>
<comment type="caution">
    <text evidence="3 4">There is some controversy about O-methyltransferase on pre-miR-145, since the dimethylation first described as the specific enzymatic activity cannot be reproduced by a more recent work which observes a monomethylation of pre-miR-145 but two orders weaker than the methylation of cytosolic histidyl tRNA.</text>
</comment>
<keyword id="KW-0002">3D-structure</keyword>
<keyword id="KW-0963">Cytoplasm</keyword>
<keyword id="KW-0489">Methyltransferase</keyword>
<keyword id="KW-1267">Proteomics identification</keyword>
<keyword id="KW-1185">Reference proteome</keyword>
<keyword id="KW-0949">S-adenosyl-L-methionine</keyword>
<keyword id="KW-0808">Transferase</keyword>
<name>BN3D2_HUMAN</name>
<proteinExistence type="evidence at protein level"/>
<evidence type="ECO:0000255" key="1">
    <source>
        <dbReference type="PROSITE-ProRule" id="PRU00848"/>
    </source>
</evidence>
<evidence type="ECO:0000256" key="2">
    <source>
        <dbReference type="SAM" id="MobiDB-lite"/>
    </source>
</evidence>
<evidence type="ECO:0000269" key="3">
    <source>
    </source>
</evidence>
<evidence type="ECO:0000269" key="4">
    <source>
    </source>
</evidence>
<evidence type="ECO:0000269" key="5">
    <source>
    </source>
</evidence>
<evidence type="ECO:0000269" key="6">
    <source>
    </source>
</evidence>
<evidence type="ECO:0000305" key="7"/>
<evidence type="ECO:0000305" key="8">
    <source>
    </source>
</evidence>
<evidence type="ECO:0000312" key="9">
    <source>
        <dbReference type="HGNC" id="HGNC:27050"/>
    </source>
</evidence>
<evidence type="ECO:0000312" key="10">
    <source>
        <dbReference type="PDB" id="6L8U"/>
    </source>
</evidence>
<evidence type="ECO:0007744" key="11">
    <source>
        <dbReference type="PDB" id="6L8U"/>
    </source>
</evidence>
<evidence type="ECO:0007829" key="12">
    <source>
        <dbReference type="PDB" id="6L8U"/>
    </source>
</evidence>
<protein>
    <recommendedName>
        <fullName evidence="7">RNA 5'-monophosphate methyltransferase</fullName>
        <ecNumber evidence="3 4 5 6">2.1.1.-</ecNumber>
    </recommendedName>
    <alternativeName>
        <fullName>BCDIN3 domain-containing protein</fullName>
    </alternativeName>
</protein>
<reference key="1">
    <citation type="journal article" date="2004" name="Nat. Genet.">
        <title>Complete sequencing and characterization of 21,243 full-length human cDNAs.</title>
        <authorList>
            <person name="Ota T."/>
            <person name="Suzuki Y."/>
            <person name="Nishikawa T."/>
            <person name="Otsuki T."/>
            <person name="Sugiyama T."/>
            <person name="Irie R."/>
            <person name="Wakamatsu A."/>
            <person name="Hayashi K."/>
            <person name="Sato H."/>
            <person name="Nagai K."/>
            <person name="Kimura K."/>
            <person name="Makita H."/>
            <person name="Sekine M."/>
            <person name="Obayashi M."/>
            <person name="Nishi T."/>
            <person name="Shibahara T."/>
            <person name="Tanaka T."/>
            <person name="Ishii S."/>
            <person name="Yamamoto J."/>
            <person name="Saito K."/>
            <person name="Kawai Y."/>
            <person name="Isono Y."/>
            <person name="Nakamura Y."/>
            <person name="Nagahari K."/>
            <person name="Murakami K."/>
            <person name="Yasuda T."/>
            <person name="Iwayanagi T."/>
            <person name="Wagatsuma M."/>
            <person name="Shiratori A."/>
            <person name="Sudo H."/>
            <person name="Hosoiri T."/>
            <person name="Kaku Y."/>
            <person name="Kodaira H."/>
            <person name="Kondo H."/>
            <person name="Sugawara M."/>
            <person name="Takahashi M."/>
            <person name="Kanda K."/>
            <person name="Yokoi T."/>
            <person name="Furuya T."/>
            <person name="Kikkawa E."/>
            <person name="Omura Y."/>
            <person name="Abe K."/>
            <person name="Kamihara K."/>
            <person name="Katsuta N."/>
            <person name="Sato K."/>
            <person name="Tanikawa M."/>
            <person name="Yamazaki M."/>
            <person name="Ninomiya K."/>
            <person name="Ishibashi T."/>
            <person name="Yamashita H."/>
            <person name="Murakawa K."/>
            <person name="Fujimori K."/>
            <person name="Tanai H."/>
            <person name="Kimata M."/>
            <person name="Watanabe M."/>
            <person name="Hiraoka S."/>
            <person name="Chiba Y."/>
            <person name="Ishida S."/>
            <person name="Ono Y."/>
            <person name="Takiguchi S."/>
            <person name="Watanabe S."/>
            <person name="Yosida M."/>
            <person name="Hotuta T."/>
            <person name="Kusano J."/>
            <person name="Kanehori K."/>
            <person name="Takahashi-Fujii A."/>
            <person name="Hara H."/>
            <person name="Tanase T.-O."/>
            <person name="Nomura Y."/>
            <person name="Togiya S."/>
            <person name="Komai F."/>
            <person name="Hara R."/>
            <person name="Takeuchi K."/>
            <person name="Arita M."/>
            <person name="Imose N."/>
            <person name="Musashino K."/>
            <person name="Yuuki H."/>
            <person name="Oshima A."/>
            <person name="Sasaki N."/>
            <person name="Aotsuka S."/>
            <person name="Yoshikawa Y."/>
            <person name="Matsunawa H."/>
            <person name="Ichihara T."/>
            <person name="Shiohata N."/>
            <person name="Sano S."/>
            <person name="Moriya S."/>
            <person name="Momiyama H."/>
            <person name="Satoh N."/>
            <person name="Takami S."/>
            <person name="Terashima Y."/>
            <person name="Suzuki O."/>
            <person name="Nakagawa S."/>
            <person name="Senoh A."/>
            <person name="Mizoguchi H."/>
            <person name="Goto Y."/>
            <person name="Shimizu F."/>
            <person name="Wakebe H."/>
            <person name="Hishigaki H."/>
            <person name="Watanabe T."/>
            <person name="Sugiyama A."/>
            <person name="Takemoto M."/>
            <person name="Kawakami B."/>
            <person name="Yamazaki M."/>
            <person name="Watanabe K."/>
            <person name="Kumagai A."/>
            <person name="Itakura S."/>
            <person name="Fukuzumi Y."/>
            <person name="Fujimori Y."/>
            <person name="Komiyama M."/>
            <person name="Tashiro H."/>
            <person name="Tanigami A."/>
            <person name="Fujiwara T."/>
            <person name="Ono T."/>
            <person name="Yamada K."/>
            <person name="Fujii Y."/>
            <person name="Ozaki K."/>
            <person name="Hirao M."/>
            <person name="Ohmori Y."/>
            <person name="Kawabata A."/>
            <person name="Hikiji T."/>
            <person name="Kobatake N."/>
            <person name="Inagaki H."/>
            <person name="Ikema Y."/>
            <person name="Okamoto S."/>
            <person name="Okitani R."/>
            <person name="Kawakami T."/>
            <person name="Noguchi S."/>
            <person name="Itoh T."/>
            <person name="Shigeta K."/>
            <person name="Senba T."/>
            <person name="Matsumura K."/>
            <person name="Nakajima Y."/>
            <person name="Mizuno T."/>
            <person name="Morinaga M."/>
            <person name="Sasaki M."/>
            <person name="Togashi T."/>
            <person name="Oyama M."/>
            <person name="Hata H."/>
            <person name="Watanabe M."/>
            <person name="Komatsu T."/>
            <person name="Mizushima-Sugano J."/>
            <person name="Satoh T."/>
            <person name="Shirai Y."/>
            <person name="Takahashi Y."/>
            <person name="Nakagawa K."/>
            <person name="Okumura K."/>
            <person name="Nagase T."/>
            <person name="Nomura N."/>
            <person name="Kikuchi H."/>
            <person name="Masuho Y."/>
            <person name="Yamashita R."/>
            <person name="Nakai K."/>
            <person name="Yada T."/>
            <person name="Nakamura Y."/>
            <person name="Ohara O."/>
            <person name="Isogai T."/>
            <person name="Sugano S."/>
        </authorList>
    </citation>
    <scope>NUCLEOTIDE SEQUENCE [LARGE SCALE MRNA]</scope>
    <source>
        <tissue>Cervix</tissue>
    </source>
</reference>
<reference key="2">
    <citation type="submission" date="2005-07" db="EMBL/GenBank/DDBJ databases">
        <authorList>
            <person name="Mural R.J."/>
            <person name="Istrail S."/>
            <person name="Sutton G.G."/>
            <person name="Florea L."/>
            <person name="Halpern A.L."/>
            <person name="Mobarry C.M."/>
            <person name="Lippert R."/>
            <person name="Walenz B."/>
            <person name="Shatkay H."/>
            <person name="Dew I."/>
            <person name="Miller J.R."/>
            <person name="Flanigan M.J."/>
            <person name="Edwards N.J."/>
            <person name="Bolanos R."/>
            <person name="Fasulo D."/>
            <person name="Halldorsson B.V."/>
            <person name="Hannenhalli S."/>
            <person name="Turner R."/>
            <person name="Yooseph S."/>
            <person name="Lu F."/>
            <person name="Nusskern D.R."/>
            <person name="Shue B.C."/>
            <person name="Zheng X.H."/>
            <person name="Zhong F."/>
            <person name="Delcher A.L."/>
            <person name="Huson D.H."/>
            <person name="Kravitz S.A."/>
            <person name="Mouchard L."/>
            <person name="Reinert K."/>
            <person name="Remington K.A."/>
            <person name="Clark A.G."/>
            <person name="Waterman M.S."/>
            <person name="Eichler E.E."/>
            <person name="Adams M.D."/>
            <person name="Hunkapiller M.W."/>
            <person name="Myers E.W."/>
            <person name="Venter J.C."/>
        </authorList>
    </citation>
    <scope>NUCLEOTIDE SEQUENCE [LARGE SCALE GENOMIC DNA]</scope>
</reference>
<reference key="3">
    <citation type="journal article" date="2004" name="Genome Res.">
        <title>The status, quality, and expansion of the NIH full-length cDNA project: the Mammalian Gene Collection (MGC).</title>
        <authorList>
            <consortium name="The MGC Project Team"/>
        </authorList>
    </citation>
    <scope>NUCLEOTIDE SEQUENCE [LARGE SCALE MRNA]</scope>
    <source>
        <tissue>Skin</tissue>
    </source>
</reference>
<reference key="4">
    <citation type="journal article" date="2012" name="Cell">
        <title>Human RNA methyltransferase BCDIN3D regulates microRNA processing.</title>
        <authorList>
            <person name="Xhemalce B."/>
            <person name="Robson S.C."/>
            <person name="Kouzarides T."/>
        </authorList>
    </citation>
    <scope>FUNCTION</scope>
    <scope>CATALYTIC ACTIVITY</scope>
    <scope>INTERACTION WITH DICER1</scope>
    <scope>MUTAGENESIS OF 72-ASP--GLU-74</scope>
    <scope>SUBCELLULAR LOCATION</scope>
</reference>
<reference key="5">
    <citation type="journal article" date="2017" name="Nucleic Acids Res.">
        <title>Human BCDIN3D monomethylates cytoplasmic histidine transfer RNA.</title>
        <authorList>
            <person name="Martinez A."/>
            <person name="Yamashita S."/>
            <person name="Nagaike T."/>
            <person name="Sakaguchi Y."/>
            <person name="Suzuki T."/>
            <person name="Tomita K."/>
        </authorList>
    </citation>
    <scope>FUNCTION</scope>
    <scope>CATALYTIC ACTIVITY</scope>
    <scope>BIOPHYSICOCHEMICAL PROPERTIES</scope>
    <scope>MUTAGENESIS OF 72-ASP--GLY-74</scope>
</reference>
<reference key="6">
    <citation type="journal article" date="2018" name="Front. Genet.">
        <title>Human BCDIN3D Is a Cytoplasmic tRNAHis-Specific 5'-Monophosphate Methyltransferase.</title>
        <authorList>
            <person name="Tomita K."/>
            <person name="Liu Y."/>
        </authorList>
    </citation>
    <scope>REVIEW OF SPECIFIC ENZYMATIC ACTIVITY</scope>
</reference>
<reference key="7">
    <citation type="journal article" date="2019" name="PLoS Genet.">
        <title>BCDIN3D regulates tRNAHis 3' fragment processing.</title>
        <authorList>
            <person name="Reinsborough C.W."/>
            <person name="Ipas H."/>
            <person name="Abell N.S."/>
            <person name="Nottingham R.M."/>
            <person name="Yao J."/>
            <person name="Devanathan S.K."/>
            <person name="Shelton S.B."/>
            <person name="Lambowitz A.M."/>
            <person name="Xhemalce B."/>
        </authorList>
    </citation>
    <scope>FUNCTION</scope>
    <scope>CATALYTIC ACTIVITY</scope>
</reference>
<reference evidence="11" key="8">
    <citation type="journal article" date="2020" name="Nucleic Acids Res.">
        <title>Crystal structure of human cytoplasmic tRNAHis-specific 5'-monomethylphosphate capping enzyme.</title>
        <authorList>
            <person name="Liu Y."/>
            <person name="Martinez A."/>
            <person name="Yamashita S."/>
            <person name="Tomita K."/>
        </authorList>
    </citation>
    <scope>X-RAY CRYSTALLOGRAPHY (2.92 ANGSTROMS) OF 14-284 IN COMPLEX WITH S-ADENOSYL-L-METHIONINE</scope>
    <scope>FUNCTION</scope>
    <scope>CATALYTIC ACTIVITY</scope>
    <scope>MUTAGENESIS OF TYR-37; ARG-46; 72-ASP--GLY-74; ASP-72; GLY-74; ASN-76; ASP-110; ILE-111; ARG-118; ASP-135; PHE-136; SER-165; ILE-166; TRP-169; GLN-198; 201-LYS--ARG-204; LYS-201; ARG-204; 208-ARG-ARG-209; ARG-208; ARG-209; 211-ARG-LYS-212; ARG-211; LYS-212 AND ARG-257</scope>
</reference>
<gene>
    <name evidence="9" type="primary">BCDIN3D</name>
</gene>
<feature type="chain" id="PRO_0000289265" description="RNA 5'-monophosphate methyltransferase">
    <location>
        <begin position="1"/>
        <end position="292"/>
    </location>
</feature>
<feature type="domain" description="Bin3-type SAM" evidence="1">
    <location>
        <begin position="53"/>
        <end position="274"/>
    </location>
</feature>
<feature type="region of interest" description="Disordered" evidence="2">
    <location>
        <begin position="1"/>
        <end position="21"/>
    </location>
</feature>
<feature type="binding site" evidence="6 10">
    <location>
        <position position="46"/>
    </location>
    <ligand>
        <name>S-adenosyl-L-methionine</name>
        <dbReference type="ChEBI" id="CHEBI:59789"/>
    </ligand>
</feature>
<feature type="binding site" evidence="6 10">
    <location>
        <position position="76"/>
    </location>
    <ligand>
        <name>S-adenosyl-L-methionine</name>
        <dbReference type="ChEBI" id="CHEBI:59789"/>
    </ligand>
</feature>
<feature type="binding site" evidence="6 10">
    <location>
        <position position="110"/>
    </location>
    <ligand>
        <name>S-adenosyl-L-methionine</name>
        <dbReference type="ChEBI" id="CHEBI:59789"/>
    </ligand>
</feature>
<feature type="binding site" evidence="6 10">
    <location>
        <begin position="135"/>
        <end position="136"/>
    </location>
    <ligand>
        <name>S-adenosyl-L-methionine</name>
        <dbReference type="ChEBI" id="CHEBI:59789"/>
    </ligand>
</feature>
<feature type="binding site" evidence="6 10">
    <location>
        <position position="164"/>
    </location>
    <ligand>
        <name>S-adenosyl-L-methionine</name>
        <dbReference type="ChEBI" id="CHEBI:59789"/>
    </ligand>
</feature>
<feature type="sequence variant" id="VAR_032614" description="In dbSNP:rs11169172.">
    <original>S</original>
    <variation>R</variation>
    <location>
        <position position="288"/>
    </location>
</feature>
<feature type="mutagenesis site" description="Abolished O-methyltransferase activity." evidence="6">
    <original>Y</original>
    <variation>A</variation>
    <variation>F</variation>
    <location>
        <position position="37"/>
    </location>
</feature>
<feature type="mutagenesis site" description="Abolished O-methyltransferase activity." evidence="6">
    <original>R</original>
    <variation>A</variation>
    <location>
        <position position="46"/>
    </location>
</feature>
<feature type="mutagenesis site" description="Abolished O-methyltransferase activity." evidence="3 4 6">
    <original>DVG</original>
    <variation>AVA</variation>
    <location>
        <begin position="72"/>
        <end position="74"/>
    </location>
</feature>
<feature type="mutagenesis site" description="Abolished O-methyltransferase activity." evidence="6">
    <original>D</original>
    <variation>A</variation>
    <location>
        <position position="72"/>
    </location>
</feature>
<feature type="mutagenesis site" description="Abolished O-methyltransferase activity." evidence="6">
    <original>G</original>
    <variation>A</variation>
    <location>
        <position position="74"/>
    </location>
</feature>
<feature type="mutagenesis site" description="Abolished O-methyltransferase activity." evidence="6">
    <original>N</original>
    <variation>A</variation>
    <location>
        <position position="76"/>
    </location>
</feature>
<feature type="mutagenesis site" description="Abolished O-methyltransferase activity." evidence="6">
    <original>D</original>
    <variation>A</variation>
    <location>
        <position position="110"/>
    </location>
</feature>
<feature type="mutagenesis site" description="Decreased O-methyltransferase activity." evidence="6">
    <original>I</original>
    <variation>G</variation>
    <location>
        <position position="111"/>
    </location>
</feature>
<feature type="mutagenesis site" description="Slightly decreased O-methyltransferase activity." evidence="6">
    <original>R</original>
    <variation>A</variation>
    <location>
        <position position="118"/>
    </location>
</feature>
<feature type="mutagenesis site" description="Decreased O-methyltransferase activity." evidence="6">
    <original>D</original>
    <variation>A</variation>
    <location>
        <position position="135"/>
    </location>
</feature>
<feature type="mutagenesis site" description="Abolished O-methyltransferase activity." evidence="6">
    <original>F</original>
    <variation>G</variation>
    <location>
        <position position="136"/>
    </location>
</feature>
<feature type="mutagenesis site" description="Decreased O-methyltransferase activity." evidence="6">
    <original>S</original>
    <variation>A</variation>
    <location>
        <position position="165"/>
    </location>
</feature>
<feature type="mutagenesis site" description="Decreased O-methyltransferase activity." evidence="6">
    <original>I</original>
    <variation>G</variation>
    <location>
        <position position="166"/>
    </location>
</feature>
<feature type="mutagenesis site" description="Abolished O-methyltransferase activity." evidence="6">
    <original>W</original>
    <variation>F</variation>
    <location>
        <position position="169"/>
    </location>
</feature>
<feature type="mutagenesis site" description="Abolished O-methyltransferase activity." evidence="6">
    <original>Q</original>
    <variation>A</variation>
    <location>
        <position position="198"/>
    </location>
</feature>
<feature type="mutagenesis site" description="Abolished O-methyltransferase activity." evidence="6">
    <original>KCYR</original>
    <variation>ACYA</variation>
    <location>
        <begin position="201"/>
        <end position="204"/>
    </location>
</feature>
<feature type="mutagenesis site" description="Decreased O-methyltransferase activity." evidence="6">
    <original>K</original>
    <variation>A</variation>
    <location>
        <position position="201"/>
    </location>
</feature>
<feature type="mutagenesis site" description="Decreased O-methyltransferase activity." evidence="6">
    <original>R</original>
    <variation>A</variation>
    <location>
        <position position="204"/>
    </location>
</feature>
<feature type="mutagenesis site" description="Abolished O-methyltransferase activity." evidence="6">
    <original>RR</original>
    <variation>AA</variation>
    <location>
        <begin position="208"/>
        <end position="209"/>
    </location>
</feature>
<feature type="mutagenesis site" description="Strongly decreased O-methyltransferase activity." evidence="6">
    <original>R</original>
    <variation>A</variation>
    <location>
        <position position="208"/>
    </location>
</feature>
<feature type="mutagenesis site" description="Abolished O-methyltransferase activity." evidence="6">
    <original>R</original>
    <variation>A</variation>
    <location>
        <position position="209"/>
    </location>
</feature>
<feature type="mutagenesis site" description="Abolished O-methyltransferase activity." evidence="6">
    <original>RK</original>
    <variation>AA</variation>
    <location>
        <begin position="211"/>
        <end position="212"/>
    </location>
</feature>
<feature type="mutagenesis site" description="Abolished O-methyltransferase activity." evidence="6">
    <original>R</original>
    <variation>A</variation>
    <location>
        <position position="211"/>
    </location>
</feature>
<feature type="mutagenesis site" description="Decreased O-methyltransferase activity." evidence="6">
    <original>K</original>
    <variation>A</variation>
    <location>
        <position position="212"/>
    </location>
</feature>
<feature type="mutagenesis site" description="Abolished O-methyltransferase activity." evidence="6">
    <original>R</original>
    <variation>A</variation>
    <location>
        <position position="257"/>
    </location>
</feature>
<feature type="helix" evidence="12">
    <location>
        <begin position="37"/>
        <end position="39"/>
    </location>
</feature>
<feature type="helix" evidence="12">
    <location>
        <begin position="44"/>
        <end position="47"/>
    </location>
</feature>
<feature type="helix" evidence="12">
    <location>
        <begin position="54"/>
        <end position="58"/>
    </location>
</feature>
<feature type="helix" evidence="12">
    <location>
        <begin position="63"/>
        <end position="65"/>
    </location>
</feature>
<feature type="strand" evidence="12">
    <location>
        <begin position="67"/>
        <end position="73"/>
    </location>
</feature>
<feature type="strand" evidence="12">
    <location>
        <begin position="76"/>
        <end position="78"/>
    </location>
</feature>
<feature type="helix" evidence="12">
    <location>
        <begin position="79"/>
        <end position="87"/>
    </location>
</feature>
<feature type="strand" evidence="12">
    <location>
        <begin position="100"/>
        <end position="102"/>
    </location>
</feature>
<feature type="strand" evidence="12">
    <location>
        <begin position="104"/>
        <end position="111"/>
    </location>
</feature>
<feature type="helix" evidence="12">
    <location>
        <begin position="113"/>
        <end position="121"/>
    </location>
</feature>
<feature type="turn" evidence="12">
    <location>
        <begin position="126"/>
        <end position="128"/>
    </location>
</feature>
<feature type="strand" evidence="12">
    <location>
        <begin position="129"/>
        <end position="133"/>
    </location>
</feature>
<feature type="helix" evidence="12">
    <location>
        <begin position="139"/>
        <end position="150"/>
    </location>
</feature>
<feature type="helix" evidence="12">
    <location>
        <begin position="151"/>
        <end position="153"/>
    </location>
</feature>
<feature type="strand" evidence="12">
    <location>
        <begin position="156"/>
        <end position="165"/>
    </location>
</feature>
<feature type="helix" evidence="12">
    <location>
        <begin position="167"/>
        <end position="187"/>
    </location>
</feature>
<feature type="strand" evidence="12">
    <location>
        <begin position="190"/>
        <end position="196"/>
    </location>
</feature>
<feature type="helix" evidence="12">
    <location>
        <begin position="200"/>
        <end position="212"/>
    </location>
</feature>
<feature type="helix" evidence="12">
    <location>
        <begin position="216"/>
        <end position="218"/>
    </location>
</feature>
<feature type="helix" evidence="12">
    <location>
        <begin position="221"/>
        <end position="223"/>
    </location>
</feature>
<feature type="helix" evidence="12">
    <location>
        <begin position="230"/>
        <end position="240"/>
    </location>
</feature>
<feature type="strand" evidence="12">
    <location>
        <begin position="245"/>
        <end position="251"/>
    </location>
</feature>
<feature type="strand" evidence="12">
    <location>
        <begin position="259"/>
        <end position="263"/>
    </location>
</feature>
<organism>
    <name type="scientific">Homo sapiens</name>
    <name type="common">Human</name>
    <dbReference type="NCBI Taxonomy" id="9606"/>
    <lineage>
        <taxon>Eukaryota</taxon>
        <taxon>Metazoa</taxon>
        <taxon>Chordata</taxon>
        <taxon>Craniata</taxon>
        <taxon>Vertebrata</taxon>
        <taxon>Euteleostomi</taxon>
        <taxon>Mammalia</taxon>
        <taxon>Eutheria</taxon>
        <taxon>Euarchontoglires</taxon>
        <taxon>Primates</taxon>
        <taxon>Haplorrhini</taxon>
        <taxon>Catarrhini</taxon>
        <taxon>Hominidae</taxon>
        <taxon>Homo</taxon>
    </lineage>
</organism>
<accession>Q7Z5W3</accession>
<accession>A8K829</accession>
<sequence length="292" mass="33200">MAVPTELDGGSVKETAAEEESRVLAPGAAPFGNFPHYSRFHPPEQRLRLLPPELLRQLFPESPENGPILGLDVGCNSGDLSVALYKHFLSLPDGETCSDASREFRLLCCDIDPVLVKRAEKECPFPDALTFITLDFMNQRTRKVLLSSFLSQFGRSVFDIGFCMSITMWIHLNHGDHGLWEFLAHLSSLCHYLLVEPQPWKCYRAAARRLRKLGLHDFDHFHSLAIRGDMPNQIVQILTQDHGMELICCFGNTSWDRSLLLFRAKQTIETHPIPESLIEKGKEKNRLSFQKQ</sequence>